<keyword id="KW-1015">Disulfide bond</keyword>
<keyword id="KW-0496">Mitochondrion</keyword>
<keyword id="KW-1185">Reference proteome</keyword>
<keyword id="KW-0809">Transit peptide</keyword>
<accession>Q6CF49</accession>
<proteinExistence type="inferred from homology"/>
<reference key="1">
    <citation type="journal article" date="2004" name="Nature">
        <title>Genome evolution in yeasts.</title>
        <authorList>
            <person name="Dujon B."/>
            <person name="Sherman D."/>
            <person name="Fischer G."/>
            <person name="Durrens P."/>
            <person name="Casaregola S."/>
            <person name="Lafontaine I."/>
            <person name="de Montigny J."/>
            <person name="Marck C."/>
            <person name="Neuveglise C."/>
            <person name="Talla E."/>
            <person name="Goffard N."/>
            <person name="Frangeul L."/>
            <person name="Aigle M."/>
            <person name="Anthouard V."/>
            <person name="Babour A."/>
            <person name="Barbe V."/>
            <person name="Barnay S."/>
            <person name="Blanchin S."/>
            <person name="Beckerich J.-M."/>
            <person name="Beyne E."/>
            <person name="Bleykasten C."/>
            <person name="Boisrame A."/>
            <person name="Boyer J."/>
            <person name="Cattolico L."/>
            <person name="Confanioleri F."/>
            <person name="de Daruvar A."/>
            <person name="Despons L."/>
            <person name="Fabre E."/>
            <person name="Fairhead C."/>
            <person name="Ferry-Dumazet H."/>
            <person name="Groppi A."/>
            <person name="Hantraye F."/>
            <person name="Hennequin C."/>
            <person name="Jauniaux N."/>
            <person name="Joyet P."/>
            <person name="Kachouri R."/>
            <person name="Kerrest A."/>
            <person name="Koszul R."/>
            <person name="Lemaire M."/>
            <person name="Lesur I."/>
            <person name="Ma L."/>
            <person name="Muller H."/>
            <person name="Nicaud J.-M."/>
            <person name="Nikolski M."/>
            <person name="Oztas S."/>
            <person name="Ozier-Kalogeropoulos O."/>
            <person name="Pellenz S."/>
            <person name="Potier S."/>
            <person name="Richard G.-F."/>
            <person name="Straub M.-L."/>
            <person name="Suleau A."/>
            <person name="Swennen D."/>
            <person name="Tekaia F."/>
            <person name="Wesolowski-Louvel M."/>
            <person name="Westhof E."/>
            <person name="Wirth B."/>
            <person name="Zeniou-Meyer M."/>
            <person name="Zivanovic Y."/>
            <person name="Bolotin-Fukuhara M."/>
            <person name="Thierry A."/>
            <person name="Bouchier C."/>
            <person name="Caudron B."/>
            <person name="Scarpelli C."/>
            <person name="Gaillardin C."/>
            <person name="Weissenbach J."/>
            <person name="Wincker P."/>
            <person name="Souciet J.-L."/>
        </authorList>
    </citation>
    <scope>NUCLEOTIDE SEQUENCE [LARGE SCALE GENOMIC DNA]</scope>
    <source>
        <strain>CLIB 122 / E 150</strain>
    </source>
</reference>
<sequence length="164" mass="19061">MADKSNSEDNKPKFMKNEDGTPMTQEQLRQKYGVDFTKEGRDGKLKYGPDDPTAMSNRVQFLAKADSQYYDPCAEASKMSLNCLERNNYKKAMCEEYFQIYRDCKKMWVSNKKQSGEIFETENITNPAGAATEGQEEWFPLVDQYLYILLLTWNVCVPYEAYMV</sequence>
<organism>
    <name type="scientific">Yarrowia lipolytica (strain CLIB 122 / E 150)</name>
    <name type="common">Yeast</name>
    <name type="synonym">Candida lipolytica</name>
    <dbReference type="NCBI Taxonomy" id="284591"/>
    <lineage>
        <taxon>Eukaryota</taxon>
        <taxon>Fungi</taxon>
        <taxon>Dikarya</taxon>
        <taxon>Ascomycota</taxon>
        <taxon>Saccharomycotina</taxon>
        <taxon>Dipodascomycetes</taxon>
        <taxon>Dipodascales</taxon>
        <taxon>Dipodascales incertae sedis</taxon>
        <taxon>Yarrowia</taxon>
    </lineage>
</organism>
<gene>
    <name type="primary">COX23</name>
    <name type="ordered locus">YALI0B10274g</name>
</gene>
<comment type="function">
    <text evidence="2">Required for the assembly of cytochrome c oxidase.</text>
</comment>
<comment type="subcellular location">
    <subcellularLocation>
        <location evidence="1">Mitochondrion intermembrane space</location>
    </subcellularLocation>
</comment>
<comment type="similarity">
    <text evidence="6">Belongs to the COX23 family.</text>
</comment>
<evidence type="ECO:0000250" key="1"/>
<evidence type="ECO:0000250" key="2">
    <source>
        <dbReference type="UniProtKB" id="P38824"/>
    </source>
</evidence>
<evidence type="ECO:0000255" key="3"/>
<evidence type="ECO:0000255" key="4">
    <source>
        <dbReference type="PROSITE-ProRule" id="PRU01150"/>
    </source>
</evidence>
<evidence type="ECO:0000256" key="5">
    <source>
        <dbReference type="SAM" id="MobiDB-lite"/>
    </source>
</evidence>
<evidence type="ECO:0000305" key="6"/>
<protein>
    <recommendedName>
        <fullName>Cytochrome c oxidase-assembly factor COX23, mitochondrial</fullName>
    </recommendedName>
</protein>
<feature type="transit peptide" description="Mitochondrion" evidence="3">
    <location>
        <begin position="1"/>
        <end status="unknown"/>
    </location>
</feature>
<feature type="chain" id="PRO_0000280668" description="Cytochrome c oxidase-assembly factor COX23, mitochondrial">
    <location>
        <begin status="unknown"/>
        <end position="164"/>
    </location>
</feature>
<feature type="domain" description="CHCH" evidence="4">
    <location>
        <begin position="70"/>
        <end position="112"/>
    </location>
</feature>
<feature type="region of interest" description="Disordered" evidence="5">
    <location>
        <begin position="1"/>
        <end position="50"/>
    </location>
</feature>
<feature type="short sequence motif" description="Cx9C motif 1" evidence="4">
    <location>
        <begin position="73"/>
        <end position="83"/>
    </location>
</feature>
<feature type="short sequence motif" description="Cx9C motif 2" evidence="4">
    <location>
        <begin position="94"/>
        <end position="104"/>
    </location>
</feature>
<feature type="compositionally biased region" description="Basic and acidic residues" evidence="5">
    <location>
        <begin position="1"/>
        <end position="19"/>
    </location>
</feature>
<feature type="compositionally biased region" description="Basic and acidic residues" evidence="5">
    <location>
        <begin position="36"/>
        <end position="49"/>
    </location>
</feature>
<feature type="disulfide bond" evidence="4">
    <location>
        <begin position="73"/>
        <end position="104"/>
    </location>
</feature>
<feature type="disulfide bond" evidence="4">
    <location>
        <begin position="83"/>
        <end position="94"/>
    </location>
</feature>
<dbReference type="EMBL" id="CR382128">
    <property type="protein sequence ID" value="CAG82958.1"/>
    <property type="molecule type" value="Genomic_DNA"/>
</dbReference>
<dbReference type="RefSeq" id="XP_500713.1">
    <property type="nucleotide sequence ID" value="XM_500713.1"/>
</dbReference>
<dbReference type="SMR" id="Q6CF49"/>
<dbReference type="FunCoup" id="Q6CF49">
    <property type="interactions" value="9"/>
</dbReference>
<dbReference type="STRING" id="284591.Q6CF49"/>
<dbReference type="EnsemblFungi" id="CAG82958">
    <property type="protein sequence ID" value="CAG82958"/>
    <property type="gene ID" value="YALI0_B10274g"/>
</dbReference>
<dbReference type="VEuPathDB" id="FungiDB:YALI0_B10274g"/>
<dbReference type="HOGENOM" id="CLU_1620338_0_0_1"/>
<dbReference type="InParanoid" id="Q6CF49"/>
<dbReference type="OrthoDB" id="104198at4891"/>
<dbReference type="Proteomes" id="UP000001300">
    <property type="component" value="Chromosome B"/>
</dbReference>
<dbReference type="GO" id="GO:0005758">
    <property type="term" value="C:mitochondrial intermembrane space"/>
    <property type="evidence" value="ECO:0007669"/>
    <property type="project" value="UniProtKB-SubCell"/>
</dbReference>
<dbReference type="GO" id="GO:0005739">
    <property type="term" value="C:mitochondrion"/>
    <property type="evidence" value="ECO:0000318"/>
    <property type="project" value="GO_Central"/>
</dbReference>
<dbReference type="GO" id="GO:0033108">
    <property type="term" value="P:mitochondrial respiratory chain complex assembly"/>
    <property type="evidence" value="ECO:0000318"/>
    <property type="project" value="GO_Central"/>
</dbReference>
<dbReference type="Gene3D" id="1.10.287.1130">
    <property type="entry name" value="CytochromE C oxidase copper chaperone"/>
    <property type="match status" value="1"/>
</dbReference>
<dbReference type="InterPro" id="IPR051040">
    <property type="entry name" value="COX23"/>
</dbReference>
<dbReference type="InterPro" id="IPR009069">
    <property type="entry name" value="Cys_alpha_HP_mot_SF"/>
</dbReference>
<dbReference type="PANTHER" id="PTHR46811">
    <property type="entry name" value="COILED-COIL-HELIX-COILED-COIL-HELIX DOMAIN-CONTAINING PROTEIN 7"/>
    <property type="match status" value="1"/>
</dbReference>
<dbReference type="PANTHER" id="PTHR46811:SF1">
    <property type="entry name" value="COILED-COIL-HELIX-COILED-COIL-HELIX DOMAIN-CONTAINING PROTEIN 7"/>
    <property type="match status" value="1"/>
</dbReference>
<dbReference type="SUPFAM" id="SSF47072">
    <property type="entry name" value="Cysteine alpha-hairpin motif"/>
    <property type="match status" value="1"/>
</dbReference>
<dbReference type="PROSITE" id="PS51808">
    <property type="entry name" value="CHCH"/>
    <property type="match status" value="1"/>
</dbReference>
<name>COX23_YARLI</name>